<evidence type="ECO:0000255" key="1">
    <source>
        <dbReference type="HAMAP-Rule" id="MF_01363"/>
    </source>
</evidence>
<evidence type="ECO:0000305" key="2"/>
<dbReference type="EMBL" id="CP000053">
    <property type="protein sequence ID" value="AAY62049.1"/>
    <property type="molecule type" value="Genomic_DNA"/>
</dbReference>
<dbReference type="SMR" id="Q4UK86"/>
<dbReference type="STRING" id="315456.RF_1198"/>
<dbReference type="KEGG" id="rfe:RF_1198"/>
<dbReference type="eggNOG" id="COG0261">
    <property type="taxonomic scope" value="Bacteria"/>
</dbReference>
<dbReference type="HOGENOM" id="CLU_061463_3_2_5"/>
<dbReference type="OrthoDB" id="9813334at2"/>
<dbReference type="Proteomes" id="UP000008548">
    <property type="component" value="Chromosome"/>
</dbReference>
<dbReference type="GO" id="GO:0005737">
    <property type="term" value="C:cytoplasm"/>
    <property type="evidence" value="ECO:0007669"/>
    <property type="project" value="UniProtKB-ARBA"/>
</dbReference>
<dbReference type="GO" id="GO:1990904">
    <property type="term" value="C:ribonucleoprotein complex"/>
    <property type="evidence" value="ECO:0007669"/>
    <property type="project" value="UniProtKB-KW"/>
</dbReference>
<dbReference type="GO" id="GO:0005840">
    <property type="term" value="C:ribosome"/>
    <property type="evidence" value="ECO:0007669"/>
    <property type="project" value="UniProtKB-KW"/>
</dbReference>
<dbReference type="GO" id="GO:0019843">
    <property type="term" value="F:rRNA binding"/>
    <property type="evidence" value="ECO:0007669"/>
    <property type="project" value="UniProtKB-UniRule"/>
</dbReference>
<dbReference type="GO" id="GO:0003735">
    <property type="term" value="F:structural constituent of ribosome"/>
    <property type="evidence" value="ECO:0007669"/>
    <property type="project" value="InterPro"/>
</dbReference>
<dbReference type="GO" id="GO:0006412">
    <property type="term" value="P:translation"/>
    <property type="evidence" value="ECO:0007669"/>
    <property type="project" value="UniProtKB-UniRule"/>
</dbReference>
<dbReference type="HAMAP" id="MF_01363">
    <property type="entry name" value="Ribosomal_bL21"/>
    <property type="match status" value="1"/>
</dbReference>
<dbReference type="InterPro" id="IPR028909">
    <property type="entry name" value="bL21-like"/>
</dbReference>
<dbReference type="InterPro" id="IPR036164">
    <property type="entry name" value="bL21-like_sf"/>
</dbReference>
<dbReference type="InterPro" id="IPR001787">
    <property type="entry name" value="Ribosomal_bL21"/>
</dbReference>
<dbReference type="InterPro" id="IPR018258">
    <property type="entry name" value="Ribosomal_bL21_CS"/>
</dbReference>
<dbReference type="NCBIfam" id="TIGR00061">
    <property type="entry name" value="L21"/>
    <property type="match status" value="1"/>
</dbReference>
<dbReference type="PANTHER" id="PTHR21349">
    <property type="entry name" value="50S RIBOSOMAL PROTEIN L21"/>
    <property type="match status" value="1"/>
</dbReference>
<dbReference type="PANTHER" id="PTHR21349:SF0">
    <property type="entry name" value="LARGE RIBOSOMAL SUBUNIT PROTEIN BL21M"/>
    <property type="match status" value="1"/>
</dbReference>
<dbReference type="Pfam" id="PF00829">
    <property type="entry name" value="Ribosomal_L21p"/>
    <property type="match status" value="1"/>
</dbReference>
<dbReference type="SUPFAM" id="SSF141091">
    <property type="entry name" value="L21p-like"/>
    <property type="match status" value="1"/>
</dbReference>
<dbReference type="PROSITE" id="PS01169">
    <property type="entry name" value="RIBOSOMAL_L21"/>
    <property type="match status" value="1"/>
</dbReference>
<organism>
    <name type="scientific">Rickettsia felis (strain ATCC VR-1525 / URRWXCal2)</name>
    <name type="common">Rickettsia azadi</name>
    <dbReference type="NCBI Taxonomy" id="315456"/>
    <lineage>
        <taxon>Bacteria</taxon>
        <taxon>Pseudomonadati</taxon>
        <taxon>Pseudomonadota</taxon>
        <taxon>Alphaproteobacteria</taxon>
        <taxon>Rickettsiales</taxon>
        <taxon>Rickettsiaceae</taxon>
        <taxon>Rickettsieae</taxon>
        <taxon>Rickettsia</taxon>
        <taxon>spotted fever group</taxon>
    </lineage>
</organism>
<gene>
    <name evidence="1" type="primary">rplU</name>
    <name type="ordered locus">RF_1198</name>
</gene>
<reference key="1">
    <citation type="journal article" date="2005" name="PLoS Biol.">
        <title>The genome sequence of Rickettsia felis identifies the first putative conjugative plasmid in an obligate intracellular parasite.</title>
        <authorList>
            <person name="Ogata H."/>
            <person name="Renesto P."/>
            <person name="Audic S."/>
            <person name="Robert C."/>
            <person name="Blanc G."/>
            <person name="Fournier P.-E."/>
            <person name="Parinello H."/>
            <person name="Claverie J.-M."/>
            <person name="Raoult D."/>
        </authorList>
    </citation>
    <scope>NUCLEOTIDE SEQUENCE [LARGE SCALE GENOMIC DNA]</scope>
    <source>
        <strain>ATCC VR-1525 / URRWXCal2</strain>
    </source>
</reference>
<protein>
    <recommendedName>
        <fullName evidence="1">Large ribosomal subunit protein bL21</fullName>
    </recommendedName>
    <alternativeName>
        <fullName evidence="2">50S ribosomal protein L21</fullName>
    </alternativeName>
</protein>
<sequence length="105" mass="12004">MFAVIKAGGKQYKVDRNSIIKVEKIDGELGSKIQFDQILMIGEYSKPSFIGTPIVKGAVVTAEITNQLKDNKIIVFKKKRRKNYRRKAGHRQELTELKILDITKQ</sequence>
<feature type="chain" id="PRO_0000270730" description="Large ribosomal subunit protein bL21">
    <location>
        <begin position="1"/>
        <end position="105"/>
    </location>
</feature>
<keyword id="KW-0687">Ribonucleoprotein</keyword>
<keyword id="KW-0689">Ribosomal protein</keyword>
<keyword id="KW-0694">RNA-binding</keyword>
<keyword id="KW-0699">rRNA-binding</keyword>
<name>RL21_RICFE</name>
<proteinExistence type="inferred from homology"/>
<accession>Q4UK86</accession>
<comment type="function">
    <text evidence="1">This protein binds to 23S rRNA in the presence of protein L20.</text>
</comment>
<comment type="subunit">
    <text evidence="1">Part of the 50S ribosomal subunit. Contacts protein L20.</text>
</comment>
<comment type="similarity">
    <text evidence="1">Belongs to the bacterial ribosomal protein bL21 family.</text>
</comment>